<gene>
    <name evidence="6" type="primary">ZIP1</name>
    <name evidence="7" type="ORF">PF3D7_0609100</name>
</gene>
<evidence type="ECO:0000255" key="1"/>
<evidence type="ECO:0000269" key="2">
    <source>
    </source>
</evidence>
<evidence type="ECO:0000269" key="3">
    <source>
    </source>
</evidence>
<evidence type="ECO:0000303" key="4">
    <source>
    </source>
</evidence>
<evidence type="ECO:0000303" key="5">
    <source>
    </source>
</evidence>
<evidence type="ECO:0000305" key="6"/>
<evidence type="ECO:0000312" key="7">
    <source>
        <dbReference type="EMBL" id="CAG25333.2"/>
    </source>
</evidence>
<evidence type="ECO:0000312" key="8">
    <source>
        <dbReference type="Proteomes" id="UP000001450"/>
    </source>
</evidence>
<sequence length="358" mass="40259">MDLLFAKIICIGIFLVVTTFGCFIPHLMGLYKEKENEEKNKRVKNILSNLNCFGSGFIFSIIMFHLLPETIHIISDHGNIRIFNTSDSQMKILYIFFFVFIGFCMQLGLEYVLPVDTNICCVSNLDSKKKLEDTLSQHITKNASTTVNIEMQNIDNIDHIHEHSCEGVHTHDEKSIGKFLEILTLQSFFLTISLAIHSCIEGMIIGTSTDVNYVFISSFCILLHKWIAGVTVSLSLNSNNMNKTLKAILLLTFVFASPLGIVLGHMAKSAGQKVTCLINAVSIGTLLFIGCEILLNEIKQNISRKVRLCKWLSFCFSCLIAFALISFTTSMAPHTHGDIDTHVHVHHHDHDHDHGHNH</sequence>
<name>ZIP1_PLAF7</name>
<proteinExistence type="evidence at protein level"/>
<reference evidence="8" key="1">
    <citation type="journal article" date="2002" name="Nature">
        <title>Genome sequence of the human malaria parasite Plasmodium falciparum.</title>
        <authorList>
            <person name="Gardner M.J."/>
            <person name="Hall N."/>
            <person name="Fung E."/>
            <person name="White O."/>
            <person name="Berriman M."/>
            <person name="Hyman R.W."/>
            <person name="Carlton J.M."/>
            <person name="Pain A."/>
            <person name="Nelson K.E."/>
            <person name="Bowman S."/>
            <person name="Paulsen I.T."/>
            <person name="James K.D."/>
            <person name="Eisen J.A."/>
            <person name="Rutherford K.M."/>
            <person name="Salzberg S.L."/>
            <person name="Craig A."/>
            <person name="Kyes S."/>
            <person name="Chan M.-S."/>
            <person name="Nene V."/>
            <person name="Shallom S.J."/>
            <person name="Suh B."/>
            <person name="Peterson J."/>
            <person name="Angiuoli S."/>
            <person name="Pertea M."/>
            <person name="Allen J."/>
            <person name="Selengut J."/>
            <person name="Haft D."/>
            <person name="Mather M.W."/>
            <person name="Vaidya A.B."/>
            <person name="Martin D.M.A."/>
            <person name="Fairlamb A.H."/>
            <person name="Fraunholz M.J."/>
            <person name="Roos D.S."/>
            <person name="Ralph S.A."/>
            <person name="McFadden G.I."/>
            <person name="Cummings L.M."/>
            <person name="Subramanian G.M."/>
            <person name="Mungall C."/>
            <person name="Venter J.C."/>
            <person name="Carucci D.J."/>
            <person name="Hoffman S.L."/>
            <person name="Newbold C."/>
            <person name="Davis R.W."/>
            <person name="Fraser C.M."/>
            <person name="Barrell B.G."/>
        </authorList>
    </citation>
    <scope>NUCLEOTIDE SEQUENCE [LARGE SCALE GENOMIC DNA]</scope>
    <source>
        <strain evidence="8">3D7</strain>
    </source>
</reference>
<reference evidence="8" key="2">
    <citation type="journal article" date="2002" name="Nature">
        <title>Sequence of Plasmodium falciparum chromosomes 1, 3-9 and 13.</title>
        <authorList>
            <person name="Hall N."/>
            <person name="Pain A."/>
            <person name="Berriman M."/>
            <person name="Churcher C.M."/>
            <person name="Harris B."/>
            <person name="Harris D."/>
            <person name="Mungall K.L."/>
            <person name="Bowman S."/>
            <person name="Atkin R."/>
            <person name="Baker S."/>
            <person name="Barron A."/>
            <person name="Brooks K."/>
            <person name="Buckee C.O."/>
            <person name="Burrows C."/>
            <person name="Cherevach I."/>
            <person name="Chillingworth C."/>
            <person name="Chillingworth T."/>
            <person name="Christodoulou Z."/>
            <person name="Clark L."/>
            <person name="Clark R."/>
            <person name="Corton C."/>
            <person name="Cronin A."/>
            <person name="Davies R.M."/>
            <person name="Davis P."/>
            <person name="Dear P."/>
            <person name="Dearden F."/>
            <person name="Doggett J."/>
            <person name="Feltwell T."/>
            <person name="Goble A."/>
            <person name="Goodhead I."/>
            <person name="Gwilliam R."/>
            <person name="Hamlin N."/>
            <person name="Hance Z."/>
            <person name="Harper D."/>
            <person name="Hauser H."/>
            <person name="Hornsby T."/>
            <person name="Holroyd S."/>
            <person name="Horrocks P."/>
            <person name="Humphray S."/>
            <person name="Jagels K."/>
            <person name="James K.D."/>
            <person name="Johnson D."/>
            <person name="Kerhornou A."/>
            <person name="Knights A."/>
            <person name="Konfortov B."/>
            <person name="Kyes S."/>
            <person name="Larke N."/>
            <person name="Lawson D."/>
            <person name="Lennard N."/>
            <person name="Line A."/>
            <person name="Maddison M."/>
            <person name="Mclean J."/>
            <person name="Mooney P."/>
            <person name="Moule S."/>
            <person name="Murphy L."/>
            <person name="Oliver K."/>
            <person name="Ormond D."/>
            <person name="Price C."/>
            <person name="Quail M.A."/>
            <person name="Rabbinowitsch E."/>
            <person name="Rajandream M.A."/>
            <person name="Rutter S."/>
            <person name="Rutherford K.M."/>
            <person name="Sanders M."/>
            <person name="Simmonds M."/>
            <person name="Seeger K."/>
            <person name="Sharp S."/>
            <person name="Smith R."/>
            <person name="Squares R."/>
            <person name="Squares S."/>
            <person name="Stevens K."/>
            <person name="Taylor K."/>
            <person name="Tivey A."/>
            <person name="Unwin L."/>
            <person name="Whitehead S."/>
            <person name="Woodward J.R."/>
            <person name="Sulston J.E."/>
            <person name="Craig A."/>
            <person name="Newbold C."/>
            <person name="Barrell B.G."/>
        </authorList>
    </citation>
    <scope>NUCLEOTIDE SEQUENCE [LARGE SCALE GENOMIC DNA]</scope>
    <source>
        <strain evidence="8">3D7</strain>
    </source>
</reference>
<reference evidence="6" key="3">
    <citation type="journal article" date="2022" name="MBio">
        <title>PMRT1, a Plasmodium-Specific Parasite Plasma Membrane Transporter, Is Essential for Asexual and Sexual Blood Stage Development.</title>
        <authorList>
            <person name="Wichers J.S."/>
            <person name="Mesen-Ramirez P."/>
            <person name="Fuchs G."/>
            <person name="Yu-Strzelczyk J."/>
            <person name="Staecker J."/>
            <person name="von Thien H."/>
            <person name="Alder A."/>
            <person name="Henshall I."/>
            <person name="Liffner B."/>
            <person name="Nagel G."/>
            <person name="Loew C."/>
            <person name="Wilson D."/>
            <person name="Spielmann T."/>
            <person name="Gao S."/>
            <person name="Gilberger T.W."/>
            <person name="Bachmann A."/>
            <person name="Strauss J."/>
        </authorList>
    </citation>
    <scope>SUBCELLULAR LOCATION</scope>
    <scope>DEVELOPMENTAL STAGE</scope>
    <scope>DISRUPTION PHENOTYPE</scope>
</reference>
<reference evidence="6" key="4">
    <citation type="journal article" date="2024" name="ACS Infect. Dis.">
        <title>Plasmodium falciparum ZIP1 Is a Zinc-Selective Transporter with Stage-Dependent Targeting to the Apicoplast and Plasma Membrane in Erythrocytic Parasites.</title>
        <authorList>
            <person name="Shrivastava D."/>
            <person name="Jha A."/>
            <person name="Kabrambam R."/>
            <person name="Vishwakarma J."/>
            <person name="Mitra K."/>
            <person name="Ramachandran R."/>
            <person name="Habib S."/>
        </authorList>
    </citation>
    <scope>FUNCTION</scope>
    <scope>TRANSPORTER ACTIVITY</scope>
    <scope>SUBUNIT</scope>
    <scope>SUBCELLULAR LOCATION</scope>
    <scope>DEVELOPMENTAL STAGE</scope>
    <scope>INDUCTION</scope>
    <scope>DOMAIN</scope>
</reference>
<feature type="chain" id="PRO_0000460276" description="Zinc transporter ZIP1">
    <location>
        <begin position="1"/>
        <end position="358"/>
    </location>
</feature>
<feature type="topological domain" description="Extracellular" evidence="6">
    <location>
        <begin position="1"/>
        <end position="7"/>
    </location>
</feature>
<feature type="transmembrane region" description="Helical" evidence="1">
    <location>
        <begin position="8"/>
        <end position="28"/>
    </location>
</feature>
<feature type="topological domain" description="Cytoplasmic" evidence="6">
    <location>
        <begin position="29"/>
        <end position="53"/>
    </location>
</feature>
<feature type="transmembrane region" description="Helical" evidence="1">
    <location>
        <begin position="54"/>
        <end position="74"/>
    </location>
</feature>
<feature type="topological domain" description="Extracellular" evidence="6">
    <location>
        <begin position="75"/>
        <end position="91"/>
    </location>
</feature>
<feature type="transmembrane region" description="Helical" evidence="1">
    <location>
        <begin position="92"/>
        <end position="112"/>
    </location>
</feature>
<feature type="topological domain" description="Cytoplasmic" evidence="6">
    <location>
        <begin position="113"/>
        <end position="186"/>
    </location>
</feature>
<feature type="transmembrane region" description="Helical" evidence="1">
    <location>
        <begin position="187"/>
        <end position="207"/>
    </location>
</feature>
<feature type="topological domain" description="Extracellular" evidence="6">
    <location>
        <begin position="208"/>
        <end position="213"/>
    </location>
</feature>
<feature type="transmembrane region" description="Helical" evidence="1">
    <location>
        <begin position="214"/>
        <end position="234"/>
    </location>
</feature>
<feature type="topological domain" description="Cytoplasmic" evidence="6">
    <location>
        <begin position="235"/>
        <end position="246"/>
    </location>
</feature>
<feature type="transmembrane region" description="Helical" evidence="1">
    <location>
        <begin position="247"/>
        <end position="267"/>
    </location>
</feature>
<feature type="topological domain" description="Extracellular" evidence="6">
    <location>
        <begin position="268"/>
        <end position="273"/>
    </location>
</feature>
<feature type="transmembrane region" description="Helical" evidence="1">
    <location>
        <begin position="274"/>
        <end position="294"/>
    </location>
</feature>
<feature type="topological domain" description="Cytoplasmic" evidence="6">
    <location>
        <begin position="295"/>
        <end position="310"/>
    </location>
</feature>
<feature type="transmembrane region" description="Helical" evidence="1">
    <location>
        <begin position="311"/>
        <end position="331"/>
    </location>
</feature>
<feature type="topological domain" description="Extracellular" evidence="6">
    <location>
        <begin position="332"/>
        <end position="358"/>
    </location>
</feature>
<comment type="function">
    <text evidence="3">Transporter for the divalent zinc cation (PubMed:38163252). Mediates the influx of zinc into cells from extracellular space (PubMed:38163252). Can transport divalent iron ions (PubMed:38163252). Does not transport manganese and cadmium cations (PubMed:38163252).</text>
</comment>
<comment type="catalytic activity">
    <reaction evidence="3">
        <text>Zn(2+)(in) = Zn(2+)(out)</text>
        <dbReference type="Rhea" id="RHEA:29351"/>
        <dbReference type="ChEBI" id="CHEBI:29105"/>
    </reaction>
    <physiologicalReaction direction="right-to-left" evidence="6">
        <dbReference type="Rhea" id="RHEA:29353"/>
    </physiologicalReaction>
</comment>
<comment type="catalytic activity">
    <reaction evidence="3">
        <text>Fe(2+)(in) = Fe(2+)(out)</text>
        <dbReference type="Rhea" id="RHEA:28486"/>
        <dbReference type="ChEBI" id="CHEBI:29033"/>
    </reaction>
    <physiologicalReaction direction="right-to-left" evidence="6">
        <dbReference type="Rhea" id="RHEA:28488"/>
    </physiologicalReaction>
</comment>
<comment type="subunit">
    <text evidence="3">Homodimer.</text>
</comment>
<comment type="subcellular location">
    <subcellularLocation>
        <location evidence="3">Plastid</location>
        <location evidence="3">Apicoplast</location>
    </subcellularLocation>
    <subcellularLocation>
        <location evidence="2 3">Cell membrane</location>
        <topology evidence="1">Multi-pass membrane protein</topology>
    </subcellularLocation>
</comment>
<comment type="developmental stage">
    <text evidence="2 3">Expressed in ring stage parasites (at protein level) (PubMed:38163252, PubMed:35404116). Expressed in trophozoites (at protein level) (PubMed:38163252, PubMed:35404116). Expressed in late schizonts (at protein level) (PubMed:38163252, PubMed:35404116). Expressed in male and female gametocytes (at protein level) (PubMed:38163252). Expressed in free merozoites (at protein level) (PubMed:35404116).</text>
</comment>
<comment type="induction">
    <text evidence="3">Induced in response to Zn(2+) depletion (at protein level).</text>
</comment>
<comment type="domain">
    <text evidence="3">C-terminal histidine-rich loop acts as a negative regulator for Fe(2+) binding and thus determines selectivity for Zn(2+).</text>
</comment>
<comment type="disruption phenotype">
    <text evidence="2">Gene knockout does not affect asexual parasite proliferation.</text>
</comment>
<comment type="similarity">
    <text evidence="6">Belongs to the ZIP transporter (TC 2.A.5) family.</text>
</comment>
<protein>
    <recommendedName>
        <fullName evidence="6">Zinc transporter ZIP1</fullName>
        <shortName evidence="4 5">PfZIP1</shortName>
    </recommendedName>
</protein>
<dbReference type="EMBL" id="AL844505">
    <property type="protein sequence ID" value="CAG25333.2"/>
    <property type="molecule type" value="Genomic_DNA"/>
</dbReference>
<dbReference type="FunCoup" id="C6KST8">
    <property type="interactions" value="5"/>
</dbReference>
<dbReference type="STRING" id="36329.C6KST8"/>
<dbReference type="TCDB" id="2.A.5.3.11">
    <property type="family name" value="the zinc (zn(2+))-iron (fe(2+)) permease (zip) family"/>
</dbReference>
<dbReference type="SwissPalm" id="C6KST8"/>
<dbReference type="PaxDb" id="5833-PFF0450c"/>
<dbReference type="EnsemblProtists" id="CAG25333">
    <property type="protein sequence ID" value="CAG25333"/>
    <property type="gene ID" value="PF3D7_0609100"/>
</dbReference>
<dbReference type="VEuPathDB" id="PlasmoDB:PF3D7_0609100"/>
<dbReference type="HOGENOM" id="CLU_822515_0_0_1"/>
<dbReference type="InParanoid" id="C6KST8"/>
<dbReference type="OrthoDB" id="448280at2759"/>
<dbReference type="PhylomeDB" id="C6KST8"/>
<dbReference type="Reactome" id="R-PFA-442380">
    <property type="pathway name" value="Zinc influx into cells by the SLC39 gene family"/>
</dbReference>
<dbReference type="Proteomes" id="UP000001450">
    <property type="component" value="Chromosome 6"/>
</dbReference>
<dbReference type="GO" id="GO:0020011">
    <property type="term" value="C:apicoplast"/>
    <property type="evidence" value="ECO:0007669"/>
    <property type="project" value="UniProtKB-SubCell"/>
</dbReference>
<dbReference type="GO" id="GO:0016020">
    <property type="term" value="C:membrane"/>
    <property type="evidence" value="ECO:0000318"/>
    <property type="project" value="GO_Central"/>
</dbReference>
<dbReference type="GO" id="GO:0005886">
    <property type="term" value="C:plasma membrane"/>
    <property type="evidence" value="ECO:0007669"/>
    <property type="project" value="UniProtKB-SubCell"/>
</dbReference>
<dbReference type="GO" id="GO:0005385">
    <property type="term" value="F:zinc ion transmembrane transporter activity"/>
    <property type="evidence" value="ECO:0000318"/>
    <property type="project" value="GO_Central"/>
</dbReference>
<dbReference type="GO" id="GO:0006826">
    <property type="term" value="P:iron ion transport"/>
    <property type="evidence" value="ECO:0007669"/>
    <property type="project" value="UniProtKB-KW"/>
</dbReference>
<dbReference type="GO" id="GO:0071577">
    <property type="term" value="P:zinc ion transmembrane transport"/>
    <property type="evidence" value="ECO:0000318"/>
    <property type="project" value="GO_Central"/>
</dbReference>
<dbReference type="InterPro" id="IPR003689">
    <property type="entry name" value="ZIP"/>
</dbReference>
<dbReference type="PANTHER" id="PTHR11040">
    <property type="entry name" value="ZINC/IRON TRANSPORTER"/>
    <property type="match status" value="1"/>
</dbReference>
<dbReference type="PANTHER" id="PTHR11040:SF140">
    <property type="entry name" value="ZRT (ZRT), IRT- (IRT-) LIKE PROTEIN TRANSPORTER"/>
    <property type="match status" value="1"/>
</dbReference>
<dbReference type="Pfam" id="PF02535">
    <property type="entry name" value="Zip"/>
    <property type="match status" value="1"/>
</dbReference>
<dbReference type="PROSITE" id="PS51257">
    <property type="entry name" value="PROKAR_LIPOPROTEIN"/>
    <property type="match status" value="1"/>
</dbReference>
<keyword id="KW-0933">Apicoplast</keyword>
<keyword id="KW-1003">Cell membrane</keyword>
<keyword id="KW-0406">Ion transport</keyword>
<keyword id="KW-0408">Iron</keyword>
<keyword id="KW-0410">Iron transport</keyword>
<keyword id="KW-0472">Membrane</keyword>
<keyword id="KW-0934">Plastid</keyword>
<keyword id="KW-1185">Reference proteome</keyword>
<keyword id="KW-0812">Transmembrane</keyword>
<keyword id="KW-1133">Transmembrane helix</keyword>
<keyword id="KW-0813">Transport</keyword>
<keyword id="KW-0862">Zinc</keyword>
<keyword id="KW-0864">Zinc transport</keyword>
<accession>C6KST8</accession>
<organism evidence="8">
    <name type="scientific">Plasmodium falciparum (isolate 3D7)</name>
    <dbReference type="NCBI Taxonomy" id="36329"/>
    <lineage>
        <taxon>Eukaryota</taxon>
        <taxon>Sar</taxon>
        <taxon>Alveolata</taxon>
        <taxon>Apicomplexa</taxon>
        <taxon>Aconoidasida</taxon>
        <taxon>Haemosporida</taxon>
        <taxon>Plasmodiidae</taxon>
        <taxon>Plasmodium</taxon>
        <taxon>Plasmodium (Laverania)</taxon>
    </lineage>
</organism>